<keyword id="KW-0520">NAD</keyword>
<keyword id="KW-0560">Oxidoreductase</keyword>
<keyword id="KW-0816">Tricarboxylic acid cycle</keyword>
<feature type="chain" id="PRO_1000191585" description="Malate dehydrogenase">
    <location>
        <begin position="1"/>
        <end position="312"/>
    </location>
</feature>
<feature type="active site" description="Proton acceptor" evidence="1">
    <location>
        <position position="177"/>
    </location>
</feature>
<feature type="binding site" evidence="1">
    <location>
        <begin position="7"/>
        <end position="13"/>
    </location>
    <ligand>
        <name>NAD(+)</name>
        <dbReference type="ChEBI" id="CHEBI:57540"/>
    </ligand>
</feature>
<feature type="binding site" evidence="1">
    <location>
        <position position="34"/>
    </location>
    <ligand>
        <name>NAD(+)</name>
        <dbReference type="ChEBI" id="CHEBI:57540"/>
    </ligand>
</feature>
<feature type="binding site" evidence="1">
    <location>
        <position position="81"/>
    </location>
    <ligand>
        <name>substrate</name>
    </ligand>
</feature>
<feature type="binding site" evidence="1">
    <location>
        <position position="87"/>
    </location>
    <ligand>
        <name>substrate</name>
    </ligand>
</feature>
<feature type="binding site" evidence="1">
    <location>
        <position position="94"/>
    </location>
    <ligand>
        <name>NAD(+)</name>
        <dbReference type="ChEBI" id="CHEBI:57540"/>
    </ligand>
</feature>
<feature type="binding site" evidence="1">
    <location>
        <begin position="117"/>
        <end position="119"/>
    </location>
    <ligand>
        <name>NAD(+)</name>
        <dbReference type="ChEBI" id="CHEBI:57540"/>
    </ligand>
</feature>
<feature type="binding site" evidence="1">
    <location>
        <position position="119"/>
    </location>
    <ligand>
        <name>substrate</name>
    </ligand>
</feature>
<feature type="binding site" evidence="1">
    <location>
        <position position="153"/>
    </location>
    <ligand>
        <name>substrate</name>
    </ligand>
</feature>
<feature type="binding site" evidence="1">
    <location>
        <position position="227"/>
    </location>
    <ligand>
        <name>NAD(+)</name>
        <dbReference type="ChEBI" id="CHEBI:57540"/>
    </ligand>
</feature>
<name>MDH_ECOLU</name>
<protein>
    <recommendedName>
        <fullName evidence="1">Malate dehydrogenase</fullName>
        <ecNumber evidence="1">1.1.1.37</ecNumber>
    </recommendedName>
</protein>
<sequence length="312" mass="32336">MKVAVLGAAGGIGQALALLLKTQLPSGSELSLYDIAPVTPGVAVDLSHIPTAVKIKGFSGEDATPALEGANVVLISAGVARKPGMDRSDLFNVNAGIVKNLVQQVAKTCPKACIGIITNPVNTTVAIAAEVLKKAGVYDKNKLFGVTTLDIIRSNTFVAELKGKQPGEVEVPVIGGHSGVTILPLLSQVPGVSFTEQEVADLTKRIQNAGTEVVEAKAGGGSATLSMGQAAARFGLSLVRALQGEQGVVECAYVEGDGQYARFFSQPLLLGKNGVEERKSIGTLSAFEKNALEGMLDTLKKDIALGEEFVNK</sequence>
<organism>
    <name type="scientific">Escherichia coli O17:K52:H18 (strain UMN026 / ExPEC)</name>
    <dbReference type="NCBI Taxonomy" id="585056"/>
    <lineage>
        <taxon>Bacteria</taxon>
        <taxon>Pseudomonadati</taxon>
        <taxon>Pseudomonadota</taxon>
        <taxon>Gammaproteobacteria</taxon>
        <taxon>Enterobacterales</taxon>
        <taxon>Enterobacteriaceae</taxon>
        <taxon>Escherichia</taxon>
    </lineage>
</organism>
<dbReference type="EC" id="1.1.1.37" evidence="1"/>
<dbReference type="EMBL" id="CU928163">
    <property type="protein sequence ID" value="CAR14864.1"/>
    <property type="molecule type" value="Genomic_DNA"/>
</dbReference>
<dbReference type="RefSeq" id="WP_001309792.1">
    <property type="nucleotide sequence ID" value="NC_011751.1"/>
</dbReference>
<dbReference type="RefSeq" id="YP_002414369.1">
    <property type="nucleotide sequence ID" value="NC_011751.1"/>
</dbReference>
<dbReference type="SMR" id="B7NDL4"/>
<dbReference type="STRING" id="585056.ECUMN_3710"/>
<dbReference type="KEGG" id="eum:ECUMN_3710"/>
<dbReference type="PATRIC" id="fig|585056.7.peg.3893"/>
<dbReference type="HOGENOM" id="CLU_047181_0_1_6"/>
<dbReference type="Proteomes" id="UP000007097">
    <property type="component" value="Chromosome"/>
</dbReference>
<dbReference type="GO" id="GO:0005737">
    <property type="term" value="C:cytoplasm"/>
    <property type="evidence" value="ECO:0007669"/>
    <property type="project" value="TreeGrafter"/>
</dbReference>
<dbReference type="GO" id="GO:0030060">
    <property type="term" value="F:L-malate dehydrogenase (NAD+) activity"/>
    <property type="evidence" value="ECO:0007669"/>
    <property type="project" value="UniProtKB-UniRule"/>
</dbReference>
<dbReference type="GO" id="GO:0006108">
    <property type="term" value="P:malate metabolic process"/>
    <property type="evidence" value="ECO:0007669"/>
    <property type="project" value="InterPro"/>
</dbReference>
<dbReference type="GO" id="GO:0006099">
    <property type="term" value="P:tricarboxylic acid cycle"/>
    <property type="evidence" value="ECO:0007669"/>
    <property type="project" value="UniProtKB-UniRule"/>
</dbReference>
<dbReference type="CDD" id="cd01337">
    <property type="entry name" value="MDH_glyoxysomal_mitochondrial"/>
    <property type="match status" value="1"/>
</dbReference>
<dbReference type="FunFam" id="3.40.50.720:FF:000017">
    <property type="entry name" value="Malate dehydrogenase"/>
    <property type="match status" value="1"/>
</dbReference>
<dbReference type="FunFam" id="3.90.110.10:FF:000001">
    <property type="entry name" value="Malate dehydrogenase"/>
    <property type="match status" value="1"/>
</dbReference>
<dbReference type="Gene3D" id="3.90.110.10">
    <property type="entry name" value="Lactate dehydrogenase/glycoside hydrolase, family 4, C-terminal"/>
    <property type="match status" value="1"/>
</dbReference>
<dbReference type="Gene3D" id="3.40.50.720">
    <property type="entry name" value="NAD(P)-binding Rossmann-like Domain"/>
    <property type="match status" value="1"/>
</dbReference>
<dbReference type="HAMAP" id="MF_01516">
    <property type="entry name" value="Malate_dehydrog_1"/>
    <property type="match status" value="1"/>
</dbReference>
<dbReference type="InterPro" id="IPR001557">
    <property type="entry name" value="L-lactate/malate_DH"/>
</dbReference>
<dbReference type="InterPro" id="IPR022383">
    <property type="entry name" value="Lactate/malate_DH_C"/>
</dbReference>
<dbReference type="InterPro" id="IPR001236">
    <property type="entry name" value="Lactate/malate_DH_N"/>
</dbReference>
<dbReference type="InterPro" id="IPR015955">
    <property type="entry name" value="Lactate_DH/Glyco_Ohase_4_C"/>
</dbReference>
<dbReference type="InterPro" id="IPR001252">
    <property type="entry name" value="Malate_DH_AS"/>
</dbReference>
<dbReference type="InterPro" id="IPR010097">
    <property type="entry name" value="Malate_DH_type1"/>
</dbReference>
<dbReference type="InterPro" id="IPR023958">
    <property type="entry name" value="Malate_DH_type1_bac"/>
</dbReference>
<dbReference type="InterPro" id="IPR036291">
    <property type="entry name" value="NAD(P)-bd_dom_sf"/>
</dbReference>
<dbReference type="NCBIfam" id="TIGR01772">
    <property type="entry name" value="MDH_euk_gproteo"/>
    <property type="match status" value="1"/>
</dbReference>
<dbReference type="PANTHER" id="PTHR11540">
    <property type="entry name" value="MALATE AND LACTATE DEHYDROGENASE"/>
    <property type="match status" value="1"/>
</dbReference>
<dbReference type="PANTHER" id="PTHR11540:SF16">
    <property type="entry name" value="MALATE DEHYDROGENASE, MITOCHONDRIAL"/>
    <property type="match status" value="1"/>
</dbReference>
<dbReference type="Pfam" id="PF02866">
    <property type="entry name" value="Ldh_1_C"/>
    <property type="match status" value="1"/>
</dbReference>
<dbReference type="Pfam" id="PF00056">
    <property type="entry name" value="Ldh_1_N"/>
    <property type="match status" value="1"/>
</dbReference>
<dbReference type="PIRSF" id="PIRSF000102">
    <property type="entry name" value="Lac_mal_DH"/>
    <property type="match status" value="1"/>
</dbReference>
<dbReference type="SUPFAM" id="SSF56327">
    <property type="entry name" value="LDH C-terminal domain-like"/>
    <property type="match status" value="1"/>
</dbReference>
<dbReference type="SUPFAM" id="SSF51735">
    <property type="entry name" value="NAD(P)-binding Rossmann-fold domains"/>
    <property type="match status" value="1"/>
</dbReference>
<dbReference type="PROSITE" id="PS00068">
    <property type="entry name" value="MDH"/>
    <property type="match status" value="1"/>
</dbReference>
<evidence type="ECO:0000255" key="1">
    <source>
        <dbReference type="HAMAP-Rule" id="MF_01516"/>
    </source>
</evidence>
<accession>B7NDL4</accession>
<comment type="function">
    <text evidence="1">Catalyzes the reversible oxidation of malate to oxaloacetate.</text>
</comment>
<comment type="catalytic activity">
    <reaction evidence="1">
        <text>(S)-malate + NAD(+) = oxaloacetate + NADH + H(+)</text>
        <dbReference type="Rhea" id="RHEA:21432"/>
        <dbReference type="ChEBI" id="CHEBI:15378"/>
        <dbReference type="ChEBI" id="CHEBI:15589"/>
        <dbReference type="ChEBI" id="CHEBI:16452"/>
        <dbReference type="ChEBI" id="CHEBI:57540"/>
        <dbReference type="ChEBI" id="CHEBI:57945"/>
        <dbReference type="EC" id="1.1.1.37"/>
    </reaction>
</comment>
<comment type="subunit">
    <text evidence="1">Homodimer.</text>
</comment>
<comment type="similarity">
    <text evidence="1">Belongs to the LDH/MDH superfamily. MDH type 1 family.</text>
</comment>
<proteinExistence type="inferred from homology"/>
<gene>
    <name evidence="1" type="primary">mdh</name>
    <name type="ordered locus">ECUMN_3710</name>
</gene>
<reference key="1">
    <citation type="journal article" date="2009" name="PLoS Genet.">
        <title>Organised genome dynamics in the Escherichia coli species results in highly diverse adaptive paths.</title>
        <authorList>
            <person name="Touchon M."/>
            <person name="Hoede C."/>
            <person name="Tenaillon O."/>
            <person name="Barbe V."/>
            <person name="Baeriswyl S."/>
            <person name="Bidet P."/>
            <person name="Bingen E."/>
            <person name="Bonacorsi S."/>
            <person name="Bouchier C."/>
            <person name="Bouvet O."/>
            <person name="Calteau A."/>
            <person name="Chiapello H."/>
            <person name="Clermont O."/>
            <person name="Cruveiller S."/>
            <person name="Danchin A."/>
            <person name="Diard M."/>
            <person name="Dossat C."/>
            <person name="Karoui M.E."/>
            <person name="Frapy E."/>
            <person name="Garry L."/>
            <person name="Ghigo J.M."/>
            <person name="Gilles A.M."/>
            <person name="Johnson J."/>
            <person name="Le Bouguenec C."/>
            <person name="Lescat M."/>
            <person name="Mangenot S."/>
            <person name="Martinez-Jehanne V."/>
            <person name="Matic I."/>
            <person name="Nassif X."/>
            <person name="Oztas S."/>
            <person name="Petit M.A."/>
            <person name="Pichon C."/>
            <person name="Rouy Z."/>
            <person name="Ruf C.S."/>
            <person name="Schneider D."/>
            <person name="Tourret J."/>
            <person name="Vacherie B."/>
            <person name="Vallenet D."/>
            <person name="Medigue C."/>
            <person name="Rocha E.P.C."/>
            <person name="Denamur E."/>
        </authorList>
    </citation>
    <scope>NUCLEOTIDE SEQUENCE [LARGE SCALE GENOMIC DNA]</scope>
    <source>
        <strain>UMN026 / ExPEC</strain>
    </source>
</reference>